<comment type="function">
    <text evidence="1">Digests double-stranded RNA. Involved in the processing of primary rRNA transcript to yield the immediate precursors to the large and small rRNAs (23S and 16S). Processes some mRNAs, and tRNAs when they are encoded in the rRNA operon. Processes pre-crRNA and tracrRNA of type II CRISPR loci if present in the organism.</text>
</comment>
<comment type="catalytic activity">
    <reaction evidence="1">
        <text>Endonucleolytic cleavage to 5'-phosphomonoester.</text>
        <dbReference type="EC" id="3.1.26.3"/>
    </reaction>
</comment>
<comment type="cofactor">
    <cofactor evidence="1">
        <name>Mg(2+)</name>
        <dbReference type="ChEBI" id="CHEBI:18420"/>
    </cofactor>
</comment>
<comment type="subunit">
    <text evidence="1">Homodimer.</text>
</comment>
<comment type="subcellular location">
    <subcellularLocation>
        <location evidence="1">Cytoplasm</location>
    </subcellularLocation>
</comment>
<comment type="similarity">
    <text evidence="1">Belongs to the ribonuclease III family.</text>
</comment>
<evidence type="ECO:0000255" key="1">
    <source>
        <dbReference type="HAMAP-Rule" id="MF_00104"/>
    </source>
</evidence>
<evidence type="ECO:0000256" key="2">
    <source>
        <dbReference type="SAM" id="MobiDB-lite"/>
    </source>
</evidence>
<dbReference type="EC" id="3.1.26.3" evidence="1"/>
<dbReference type="EMBL" id="CP000703">
    <property type="protein sequence ID" value="ABQ49091.1"/>
    <property type="molecule type" value="Genomic_DNA"/>
</dbReference>
<dbReference type="RefSeq" id="WP_000043237.1">
    <property type="nucleotide sequence ID" value="NC_009487.1"/>
</dbReference>
<dbReference type="SMR" id="A5ISB8"/>
<dbReference type="KEGG" id="saj:SaurJH9_1292"/>
<dbReference type="HOGENOM" id="CLU_000907_1_3_9"/>
<dbReference type="GO" id="GO:0005737">
    <property type="term" value="C:cytoplasm"/>
    <property type="evidence" value="ECO:0007669"/>
    <property type="project" value="UniProtKB-SubCell"/>
</dbReference>
<dbReference type="GO" id="GO:0003725">
    <property type="term" value="F:double-stranded RNA binding"/>
    <property type="evidence" value="ECO:0007669"/>
    <property type="project" value="TreeGrafter"/>
</dbReference>
<dbReference type="GO" id="GO:0046872">
    <property type="term" value="F:metal ion binding"/>
    <property type="evidence" value="ECO:0007669"/>
    <property type="project" value="UniProtKB-KW"/>
</dbReference>
<dbReference type="GO" id="GO:0004525">
    <property type="term" value="F:ribonuclease III activity"/>
    <property type="evidence" value="ECO:0007669"/>
    <property type="project" value="UniProtKB-UniRule"/>
</dbReference>
<dbReference type="GO" id="GO:0019843">
    <property type="term" value="F:rRNA binding"/>
    <property type="evidence" value="ECO:0007669"/>
    <property type="project" value="UniProtKB-KW"/>
</dbReference>
<dbReference type="GO" id="GO:0006397">
    <property type="term" value="P:mRNA processing"/>
    <property type="evidence" value="ECO:0007669"/>
    <property type="project" value="UniProtKB-UniRule"/>
</dbReference>
<dbReference type="GO" id="GO:0010468">
    <property type="term" value="P:regulation of gene expression"/>
    <property type="evidence" value="ECO:0007669"/>
    <property type="project" value="TreeGrafter"/>
</dbReference>
<dbReference type="GO" id="GO:0006364">
    <property type="term" value="P:rRNA processing"/>
    <property type="evidence" value="ECO:0007669"/>
    <property type="project" value="UniProtKB-UniRule"/>
</dbReference>
<dbReference type="GO" id="GO:0008033">
    <property type="term" value="P:tRNA processing"/>
    <property type="evidence" value="ECO:0007669"/>
    <property type="project" value="UniProtKB-KW"/>
</dbReference>
<dbReference type="CDD" id="cd10845">
    <property type="entry name" value="DSRM_RNAse_III_family"/>
    <property type="match status" value="1"/>
</dbReference>
<dbReference type="CDD" id="cd00593">
    <property type="entry name" value="RIBOc"/>
    <property type="match status" value="1"/>
</dbReference>
<dbReference type="FunFam" id="1.10.1520.10:FF:000001">
    <property type="entry name" value="Ribonuclease 3"/>
    <property type="match status" value="1"/>
</dbReference>
<dbReference type="FunFam" id="3.30.160.20:FF:000003">
    <property type="entry name" value="Ribonuclease 3"/>
    <property type="match status" value="1"/>
</dbReference>
<dbReference type="Gene3D" id="3.30.160.20">
    <property type="match status" value="1"/>
</dbReference>
<dbReference type="Gene3D" id="1.10.1520.10">
    <property type="entry name" value="Ribonuclease III domain"/>
    <property type="match status" value="1"/>
</dbReference>
<dbReference type="HAMAP" id="MF_00104">
    <property type="entry name" value="RNase_III"/>
    <property type="match status" value="1"/>
</dbReference>
<dbReference type="InterPro" id="IPR014720">
    <property type="entry name" value="dsRBD_dom"/>
</dbReference>
<dbReference type="InterPro" id="IPR011907">
    <property type="entry name" value="RNase_III"/>
</dbReference>
<dbReference type="InterPro" id="IPR000999">
    <property type="entry name" value="RNase_III_dom"/>
</dbReference>
<dbReference type="InterPro" id="IPR036389">
    <property type="entry name" value="RNase_III_sf"/>
</dbReference>
<dbReference type="NCBIfam" id="TIGR02191">
    <property type="entry name" value="RNaseIII"/>
    <property type="match status" value="1"/>
</dbReference>
<dbReference type="PANTHER" id="PTHR11207:SF0">
    <property type="entry name" value="RIBONUCLEASE 3"/>
    <property type="match status" value="1"/>
</dbReference>
<dbReference type="PANTHER" id="PTHR11207">
    <property type="entry name" value="RIBONUCLEASE III"/>
    <property type="match status" value="1"/>
</dbReference>
<dbReference type="Pfam" id="PF00035">
    <property type="entry name" value="dsrm"/>
    <property type="match status" value="1"/>
</dbReference>
<dbReference type="Pfam" id="PF14622">
    <property type="entry name" value="Ribonucleas_3_3"/>
    <property type="match status" value="1"/>
</dbReference>
<dbReference type="SMART" id="SM00358">
    <property type="entry name" value="DSRM"/>
    <property type="match status" value="1"/>
</dbReference>
<dbReference type="SMART" id="SM00535">
    <property type="entry name" value="RIBOc"/>
    <property type="match status" value="1"/>
</dbReference>
<dbReference type="SUPFAM" id="SSF54768">
    <property type="entry name" value="dsRNA-binding domain-like"/>
    <property type="match status" value="1"/>
</dbReference>
<dbReference type="SUPFAM" id="SSF69065">
    <property type="entry name" value="RNase III domain-like"/>
    <property type="match status" value="1"/>
</dbReference>
<dbReference type="PROSITE" id="PS50137">
    <property type="entry name" value="DS_RBD"/>
    <property type="match status" value="1"/>
</dbReference>
<dbReference type="PROSITE" id="PS00517">
    <property type="entry name" value="RNASE_3_1"/>
    <property type="match status" value="1"/>
</dbReference>
<dbReference type="PROSITE" id="PS50142">
    <property type="entry name" value="RNASE_3_2"/>
    <property type="match status" value="1"/>
</dbReference>
<reference key="1">
    <citation type="submission" date="2007-05" db="EMBL/GenBank/DDBJ databases">
        <title>Complete sequence of chromosome of Staphylococcus aureus subsp. aureus JH9.</title>
        <authorList>
            <consortium name="US DOE Joint Genome Institute"/>
            <person name="Copeland A."/>
            <person name="Lucas S."/>
            <person name="Lapidus A."/>
            <person name="Barry K."/>
            <person name="Detter J.C."/>
            <person name="Glavina del Rio T."/>
            <person name="Hammon N."/>
            <person name="Israni S."/>
            <person name="Pitluck S."/>
            <person name="Chain P."/>
            <person name="Malfatti S."/>
            <person name="Shin M."/>
            <person name="Vergez L."/>
            <person name="Schmutz J."/>
            <person name="Larimer F."/>
            <person name="Land M."/>
            <person name="Hauser L."/>
            <person name="Kyrpides N."/>
            <person name="Kim E."/>
            <person name="Tomasz A."/>
            <person name="Richardson P."/>
        </authorList>
    </citation>
    <scope>NUCLEOTIDE SEQUENCE [LARGE SCALE GENOMIC DNA]</scope>
    <source>
        <strain>JH9</strain>
    </source>
</reference>
<name>RNC_STAA9</name>
<protein>
    <recommendedName>
        <fullName evidence="1">Ribonuclease 3</fullName>
        <ecNumber evidence="1">3.1.26.3</ecNumber>
    </recommendedName>
    <alternativeName>
        <fullName evidence="1">Ribonuclease III</fullName>
        <shortName evidence="1">RNase III</shortName>
    </alternativeName>
</protein>
<keyword id="KW-0963">Cytoplasm</keyword>
<keyword id="KW-0255">Endonuclease</keyword>
<keyword id="KW-0378">Hydrolase</keyword>
<keyword id="KW-0460">Magnesium</keyword>
<keyword id="KW-0479">Metal-binding</keyword>
<keyword id="KW-0507">mRNA processing</keyword>
<keyword id="KW-0540">Nuclease</keyword>
<keyword id="KW-0694">RNA-binding</keyword>
<keyword id="KW-0698">rRNA processing</keyword>
<keyword id="KW-0699">rRNA-binding</keyword>
<keyword id="KW-0819">tRNA processing</keyword>
<proteinExistence type="inferred from homology"/>
<sequence>MSKQKKSEIVNRFRKRFDTKMTELGFTYQNIDLYQQAFSHSSFINDFNMNRLDHNERLEFLGDAVLELTVSRYLFDKHPNLPEGNLTKMRATIVCEPSLVIFANKIGLNEMILLGKGEEKTGGRTRPSLISDAFEAFIGALYLDQGLDIVWKFAEKVIFPHVEQNELLGVVDFKTQFQEYVHQQNKGDVTYNLIKEEGPAHHRLFTSEVILQGEAIAEGKGKTKKESEQRAAESAYKQLKQIK</sequence>
<accession>A5ISB8</accession>
<gene>
    <name evidence="1" type="primary">rnc</name>
    <name type="ordered locus">SaurJH9_1292</name>
</gene>
<feature type="chain" id="PRO_1000075830" description="Ribonuclease 3">
    <location>
        <begin position="1"/>
        <end position="243"/>
    </location>
</feature>
<feature type="domain" description="RNase III" evidence="1">
    <location>
        <begin position="10"/>
        <end position="146"/>
    </location>
</feature>
<feature type="domain" description="DRBM" evidence="1">
    <location>
        <begin position="172"/>
        <end position="241"/>
    </location>
</feature>
<feature type="region of interest" description="Disordered" evidence="2">
    <location>
        <begin position="219"/>
        <end position="243"/>
    </location>
</feature>
<feature type="compositionally biased region" description="Basic and acidic residues" evidence="2">
    <location>
        <begin position="219"/>
        <end position="231"/>
    </location>
</feature>
<feature type="active site" evidence="1">
    <location>
        <position position="63"/>
    </location>
</feature>
<feature type="active site" evidence="1">
    <location>
        <position position="135"/>
    </location>
</feature>
<feature type="binding site" evidence="1">
    <location>
        <position position="59"/>
    </location>
    <ligand>
        <name>Mg(2+)</name>
        <dbReference type="ChEBI" id="CHEBI:18420"/>
    </ligand>
</feature>
<feature type="binding site" evidence="1">
    <location>
        <position position="132"/>
    </location>
    <ligand>
        <name>Mg(2+)</name>
        <dbReference type="ChEBI" id="CHEBI:18420"/>
    </ligand>
</feature>
<feature type="binding site" evidence="1">
    <location>
        <position position="135"/>
    </location>
    <ligand>
        <name>Mg(2+)</name>
        <dbReference type="ChEBI" id="CHEBI:18420"/>
    </ligand>
</feature>
<organism>
    <name type="scientific">Staphylococcus aureus (strain JH9)</name>
    <dbReference type="NCBI Taxonomy" id="359786"/>
    <lineage>
        <taxon>Bacteria</taxon>
        <taxon>Bacillati</taxon>
        <taxon>Bacillota</taxon>
        <taxon>Bacilli</taxon>
        <taxon>Bacillales</taxon>
        <taxon>Staphylococcaceae</taxon>
        <taxon>Staphylococcus</taxon>
    </lineage>
</organism>